<keyword id="KW-0049">Antioxidant</keyword>
<keyword id="KW-0150">Chloroplast</keyword>
<keyword id="KW-0903">Direct protein sequencing</keyword>
<keyword id="KW-1015">Disulfide bond</keyword>
<keyword id="KW-0560">Oxidoreductase</keyword>
<keyword id="KW-0575">Peroxidase</keyword>
<keyword id="KW-0934">Plastid</keyword>
<keyword id="KW-0676">Redox-active center</keyword>
<proteinExistence type="evidence at protein level"/>
<evidence type="ECO:0000250" key="1">
    <source>
        <dbReference type="UniProtKB" id="Q06830"/>
    </source>
</evidence>
<evidence type="ECO:0000250" key="2">
    <source>
        <dbReference type="UniProtKB" id="Q96291"/>
    </source>
</evidence>
<evidence type="ECO:0000269" key="3">
    <source>
    </source>
</evidence>
<evidence type="ECO:0000303" key="4">
    <source>
    </source>
</evidence>
<evidence type="ECO:0000305" key="5"/>
<name>BAS1_PINST</name>
<reference evidence="5" key="1">
    <citation type="journal article" date="2006" name="Mol. Plant Microbe Interact.">
        <title>Proteomic comparison of needles from blister rust-resistant and susceptible Pinus strobus seedlings reveals upregulation of putative disease resistance proteins.</title>
        <authorList>
            <person name="Smith J.A."/>
            <person name="Blanchette R.A."/>
            <person name="Burnes T.A."/>
            <person name="Jacobs J.J."/>
            <person name="Higgins L."/>
            <person name="Witthuhn B.A."/>
            <person name="David A.J."/>
            <person name="Gillman J.H."/>
        </authorList>
    </citation>
    <scope>PROTEIN SEQUENCE</scope>
    <source>
        <tissue evidence="3">Leaf</tissue>
    </source>
</reference>
<dbReference type="EC" id="1.11.1.24" evidence="2"/>
<dbReference type="GO" id="GO:0009507">
    <property type="term" value="C:chloroplast"/>
    <property type="evidence" value="ECO:0007669"/>
    <property type="project" value="UniProtKB-SubCell"/>
</dbReference>
<dbReference type="GO" id="GO:0140824">
    <property type="term" value="F:thioredoxin-dependent peroxiredoxin activity"/>
    <property type="evidence" value="ECO:0007669"/>
    <property type="project" value="UniProtKB-EC"/>
</dbReference>
<sequence>GLFIIDKEGVIQHSTINNEGVIQHSTINNLAIGRFGVLLADQGLALRSIPNGPSAL</sequence>
<protein>
    <recommendedName>
        <fullName>Putative 2-Cys peroxiredoxin BAS1</fullName>
        <ecNumber evidence="2">1.11.1.24</ecNumber>
    </recommendedName>
    <alternativeName>
        <fullName>PS13</fullName>
    </alternativeName>
    <alternativeName>
        <fullName>Thiol-specific antioxidant protein</fullName>
    </alternativeName>
    <alternativeName>
        <fullName evidence="5">Thioredoxin-dependent peroxiredoxin BAS1</fullName>
    </alternativeName>
</protein>
<comment type="function">
    <text evidence="2">Thiol-specific peroxidase that catalyzes the reduction of hydrogen peroxide and organic hydroperoxides to water and alcohols, respectively. Plays a role in cell protection against oxidative stress by detoxifying peroxides. May be an antioxidant enzyme particularly in the developing shoot and photosynthesizing leaf.</text>
</comment>
<comment type="catalytic activity">
    <reaction evidence="2">
        <text>a hydroperoxide + [thioredoxin]-dithiol = an alcohol + [thioredoxin]-disulfide + H2O</text>
        <dbReference type="Rhea" id="RHEA:62620"/>
        <dbReference type="Rhea" id="RHEA-COMP:10698"/>
        <dbReference type="Rhea" id="RHEA-COMP:10700"/>
        <dbReference type="ChEBI" id="CHEBI:15377"/>
        <dbReference type="ChEBI" id="CHEBI:29950"/>
        <dbReference type="ChEBI" id="CHEBI:30879"/>
        <dbReference type="ChEBI" id="CHEBI:35924"/>
        <dbReference type="ChEBI" id="CHEBI:50058"/>
        <dbReference type="EC" id="1.11.1.24"/>
    </reaction>
</comment>
<comment type="subunit">
    <text evidence="1">Homodimer; disulfide-linked, upon oxidation.</text>
</comment>
<comment type="subcellular location">
    <subcellularLocation>
        <location evidence="2">Plastid</location>
        <location evidence="2">Chloroplast</location>
    </subcellularLocation>
</comment>
<comment type="miscellaneous">
    <text evidence="3">On the 2D-gel the determined pI of this protein is: 5.7, its MW is: 22.8 kDa.</text>
</comment>
<comment type="miscellaneous">
    <text evidence="2">The active site is a conserved redox-active cysteine residue, the peroxidatic cysteine (C(P)), which makes the nucleophilic attack on the peroxide substrate. The peroxide oxidizes the C(P)-SH to cysteine sulfenic acid (C(P)-SOH), which then reacts with another cysteine residue, the resolving cysteine (C(R)), to form a disulfide bridge. The disulfide is subsequently reduced by an appropriate electron donor to complete the catalytic cycle. In this typical 2-Cys peroxiredoxin, C(R) is provided by the other dimeric subunit to form an intersubunit disulfide. The disulfide is subsequently reduced by thioredoxin.</text>
</comment>
<comment type="similarity">
    <text evidence="5">Belongs to the peroxiredoxin family. AhpC/Prx1 subfamily.</text>
</comment>
<comment type="caution">
    <text evidence="3">The order of the peptides shown is unknown.</text>
</comment>
<feature type="chain" id="PRO_0000240611" description="Putative 2-Cys peroxiredoxin BAS1">
    <location>
        <begin position="1" status="less than"/>
        <end position="56" status="greater than"/>
    </location>
</feature>
<feature type="non-consecutive residues" evidence="4">
    <location>
        <begin position="18"/>
        <end position="19"/>
    </location>
</feature>
<feature type="non-consecutive residues" evidence="4">
    <location>
        <begin position="34"/>
        <end position="35"/>
    </location>
</feature>
<feature type="non-consecutive residues" evidence="4">
    <location>
        <begin position="47"/>
        <end position="48"/>
    </location>
</feature>
<feature type="non-terminal residue" evidence="4">
    <location>
        <position position="1"/>
    </location>
</feature>
<feature type="non-terminal residue" evidence="4">
    <location>
        <position position="56"/>
    </location>
</feature>
<organism>
    <name type="scientific">Pinus strobus</name>
    <name type="common">Eastern white pine</name>
    <dbReference type="NCBI Taxonomy" id="3348"/>
    <lineage>
        <taxon>Eukaryota</taxon>
        <taxon>Viridiplantae</taxon>
        <taxon>Streptophyta</taxon>
        <taxon>Embryophyta</taxon>
        <taxon>Tracheophyta</taxon>
        <taxon>Spermatophyta</taxon>
        <taxon>Pinopsida</taxon>
        <taxon>Pinidae</taxon>
        <taxon>Conifers I</taxon>
        <taxon>Pinales</taxon>
        <taxon>Pinaceae</taxon>
        <taxon>Pinus</taxon>
        <taxon>Pinus subgen. Strobus</taxon>
    </lineage>
</organism>
<accession>P84729</accession>